<dbReference type="EC" id="3.1.26.4" evidence="1"/>
<dbReference type="EMBL" id="CP000058">
    <property type="protein sequence ID" value="AAZ36009.1"/>
    <property type="molecule type" value="Genomic_DNA"/>
</dbReference>
<dbReference type="RefSeq" id="WP_011168174.1">
    <property type="nucleotide sequence ID" value="NC_005773.3"/>
</dbReference>
<dbReference type="SMR" id="Q48KX6"/>
<dbReference type="KEGG" id="psp:PSPPH_1712"/>
<dbReference type="eggNOG" id="COG0328">
    <property type="taxonomic scope" value="Bacteria"/>
</dbReference>
<dbReference type="HOGENOM" id="CLU_030894_6_0_6"/>
<dbReference type="Proteomes" id="UP000000551">
    <property type="component" value="Chromosome"/>
</dbReference>
<dbReference type="GO" id="GO:0005737">
    <property type="term" value="C:cytoplasm"/>
    <property type="evidence" value="ECO:0007669"/>
    <property type="project" value="UniProtKB-SubCell"/>
</dbReference>
<dbReference type="GO" id="GO:0000287">
    <property type="term" value="F:magnesium ion binding"/>
    <property type="evidence" value="ECO:0007669"/>
    <property type="project" value="UniProtKB-UniRule"/>
</dbReference>
<dbReference type="GO" id="GO:0003676">
    <property type="term" value="F:nucleic acid binding"/>
    <property type="evidence" value="ECO:0007669"/>
    <property type="project" value="InterPro"/>
</dbReference>
<dbReference type="GO" id="GO:0004523">
    <property type="term" value="F:RNA-DNA hybrid ribonuclease activity"/>
    <property type="evidence" value="ECO:0007669"/>
    <property type="project" value="UniProtKB-UniRule"/>
</dbReference>
<dbReference type="GO" id="GO:0043137">
    <property type="term" value="P:DNA replication, removal of RNA primer"/>
    <property type="evidence" value="ECO:0007669"/>
    <property type="project" value="TreeGrafter"/>
</dbReference>
<dbReference type="CDD" id="cd09278">
    <property type="entry name" value="RNase_HI_prokaryote_like"/>
    <property type="match status" value="1"/>
</dbReference>
<dbReference type="FunFam" id="3.30.420.10:FF:000089">
    <property type="entry name" value="Ribonuclease H"/>
    <property type="match status" value="1"/>
</dbReference>
<dbReference type="Gene3D" id="3.30.420.10">
    <property type="entry name" value="Ribonuclease H-like superfamily/Ribonuclease H"/>
    <property type="match status" value="1"/>
</dbReference>
<dbReference type="HAMAP" id="MF_00042">
    <property type="entry name" value="RNase_H"/>
    <property type="match status" value="1"/>
</dbReference>
<dbReference type="InterPro" id="IPR050092">
    <property type="entry name" value="RNase_H"/>
</dbReference>
<dbReference type="InterPro" id="IPR012337">
    <property type="entry name" value="RNaseH-like_sf"/>
</dbReference>
<dbReference type="InterPro" id="IPR002156">
    <property type="entry name" value="RNaseH_domain"/>
</dbReference>
<dbReference type="InterPro" id="IPR036397">
    <property type="entry name" value="RNaseH_sf"/>
</dbReference>
<dbReference type="InterPro" id="IPR022892">
    <property type="entry name" value="RNaseHI"/>
</dbReference>
<dbReference type="NCBIfam" id="NF001236">
    <property type="entry name" value="PRK00203.1"/>
    <property type="match status" value="1"/>
</dbReference>
<dbReference type="PANTHER" id="PTHR10642">
    <property type="entry name" value="RIBONUCLEASE H1"/>
    <property type="match status" value="1"/>
</dbReference>
<dbReference type="PANTHER" id="PTHR10642:SF26">
    <property type="entry name" value="RIBONUCLEASE H1"/>
    <property type="match status" value="1"/>
</dbReference>
<dbReference type="Pfam" id="PF00075">
    <property type="entry name" value="RNase_H"/>
    <property type="match status" value="1"/>
</dbReference>
<dbReference type="SUPFAM" id="SSF53098">
    <property type="entry name" value="Ribonuclease H-like"/>
    <property type="match status" value="1"/>
</dbReference>
<dbReference type="PROSITE" id="PS50879">
    <property type="entry name" value="RNASE_H_1"/>
    <property type="match status" value="1"/>
</dbReference>
<comment type="function">
    <text evidence="1">Endonuclease that specifically degrades the RNA of RNA-DNA hybrids.</text>
</comment>
<comment type="catalytic activity">
    <reaction evidence="1">
        <text>Endonucleolytic cleavage to 5'-phosphomonoester.</text>
        <dbReference type="EC" id="3.1.26.4"/>
    </reaction>
</comment>
<comment type="cofactor">
    <cofactor evidence="1">
        <name>Mg(2+)</name>
        <dbReference type="ChEBI" id="CHEBI:18420"/>
    </cofactor>
    <text evidence="1">Binds 1 Mg(2+) ion per subunit. May bind a second metal ion at a regulatory site, or after substrate binding.</text>
</comment>
<comment type="subunit">
    <text evidence="1">Monomer.</text>
</comment>
<comment type="subcellular location">
    <subcellularLocation>
        <location evidence="1">Cytoplasm</location>
    </subcellularLocation>
</comment>
<comment type="similarity">
    <text evidence="1">Belongs to the RNase H family.</text>
</comment>
<keyword id="KW-0963">Cytoplasm</keyword>
<keyword id="KW-0255">Endonuclease</keyword>
<keyword id="KW-0378">Hydrolase</keyword>
<keyword id="KW-0460">Magnesium</keyword>
<keyword id="KW-0479">Metal-binding</keyword>
<keyword id="KW-0540">Nuclease</keyword>
<protein>
    <recommendedName>
        <fullName evidence="1">Ribonuclease H</fullName>
        <shortName evidence="1">RNase H</shortName>
        <ecNumber evidence="1">3.1.26.4</ecNumber>
    </recommendedName>
</protein>
<name>RNH_PSE14</name>
<evidence type="ECO:0000255" key="1">
    <source>
        <dbReference type="HAMAP-Rule" id="MF_00042"/>
    </source>
</evidence>
<evidence type="ECO:0000255" key="2">
    <source>
        <dbReference type="PROSITE-ProRule" id="PRU00408"/>
    </source>
</evidence>
<reference key="1">
    <citation type="journal article" date="2005" name="J. Bacteriol.">
        <title>Whole-genome sequence analysis of Pseudomonas syringae pv. phaseolicola 1448A reveals divergence among pathovars in genes involved in virulence and transposition.</title>
        <authorList>
            <person name="Joardar V."/>
            <person name="Lindeberg M."/>
            <person name="Jackson R.W."/>
            <person name="Selengut J."/>
            <person name="Dodson R."/>
            <person name="Brinkac L.M."/>
            <person name="Daugherty S.C."/>
            <person name="DeBoy R.T."/>
            <person name="Durkin A.S."/>
            <person name="Gwinn Giglio M."/>
            <person name="Madupu R."/>
            <person name="Nelson W.C."/>
            <person name="Rosovitz M.J."/>
            <person name="Sullivan S.A."/>
            <person name="Crabtree J."/>
            <person name="Creasy T."/>
            <person name="Davidsen T.M."/>
            <person name="Haft D.H."/>
            <person name="Zafar N."/>
            <person name="Zhou L."/>
            <person name="Halpin R."/>
            <person name="Holley T."/>
            <person name="Khouri H.M."/>
            <person name="Feldblyum T.V."/>
            <person name="White O."/>
            <person name="Fraser C.M."/>
            <person name="Chatterjee A.K."/>
            <person name="Cartinhour S."/>
            <person name="Schneider D."/>
            <person name="Mansfield J.W."/>
            <person name="Collmer A."/>
            <person name="Buell R."/>
        </authorList>
    </citation>
    <scope>NUCLEOTIDE SEQUENCE [LARGE SCALE GENOMIC DNA]</scope>
    <source>
        <strain>1448A / Race 6</strain>
    </source>
</reference>
<gene>
    <name evidence="1" type="primary">rnhA</name>
    <name type="ordered locus">PSPPH_1712</name>
</gene>
<feature type="chain" id="PRO_1000074651" description="Ribonuclease H">
    <location>
        <begin position="1"/>
        <end position="149"/>
    </location>
</feature>
<feature type="domain" description="RNase H type-1" evidence="2">
    <location>
        <begin position="1"/>
        <end position="142"/>
    </location>
</feature>
<feature type="binding site" evidence="1">
    <location>
        <position position="10"/>
    </location>
    <ligand>
        <name>Mg(2+)</name>
        <dbReference type="ChEBI" id="CHEBI:18420"/>
        <label>1</label>
    </ligand>
</feature>
<feature type="binding site" evidence="1">
    <location>
        <position position="10"/>
    </location>
    <ligand>
        <name>Mg(2+)</name>
        <dbReference type="ChEBI" id="CHEBI:18420"/>
        <label>2</label>
    </ligand>
</feature>
<feature type="binding site" evidence="1">
    <location>
        <position position="48"/>
    </location>
    <ligand>
        <name>Mg(2+)</name>
        <dbReference type="ChEBI" id="CHEBI:18420"/>
        <label>1</label>
    </ligand>
</feature>
<feature type="binding site" evidence="1">
    <location>
        <position position="70"/>
    </location>
    <ligand>
        <name>Mg(2+)</name>
        <dbReference type="ChEBI" id="CHEBI:18420"/>
        <label>1</label>
    </ligand>
</feature>
<feature type="binding site" evidence="1">
    <location>
        <position position="134"/>
    </location>
    <ligand>
        <name>Mg(2+)</name>
        <dbReference type="ChEBI" id="CHEBI:18420"/>
        <label>2</label>
    </ligand>
</feature>
<accession>Q48KX6</accession>
<organism>
    <name type="scientific">Pseudomonas savastanoi pv. phaseolicola (strain 1448A / Race 6)</name>
    <name type="common">Pseudomonas syringae pv. phaseolicola (strain 1448A / Race 6)</name>
    <dbReference type="NCBI Taxonomy" id="264730"/>
    <lineage>
        <taxon>Bacteria</taxon>
        <taxon>Pseudomonadati</taxon>
        <taxon>Pseudomonadota</taxon>
        <taxon>Gammaproteobacteria</taxon>
        <taxon>Pseudomonadales</taxon>
        <taxon>Pseudomonadaceae</taxon>
        <taxon>Pseudomonas</taxon>
    </lineage>
</organism>
<proteinExistence type="inferred from homology"/>
<sequence length="149" mass="16699">MSDSVELFTDGACKGNPGPGGWGALLVFKGVEKELWGGEANTTNNRMELTGAIRGLEELKRPCEVTLVTDSQYVMKGITEWMVNWKKRGWKTAAKEPVKNADLWQLLDEQVSRHNVKWQWVRGHIGHPGNERADQLANRGVDEVRGIKS</sequence>